<gene>
    <name evidence="1" type="primary">rpl24e</name>
    <name type="ordered locus">LS215_2016</name>
</gene>
<protein>
    <recommendedName>
        <fullName evidence="1">Large ribosomal subunit protein eL24</fullName>
    </recommendedName>
    <alternativeName>
        <fullName evidence="2">50S ribosomal protein L24e</fullName>
    </alternativeName>
</protein>
<evidence type="ECO:0000255" key="1">
    <source>
        <dbReference type="HAMAP-Rule" id="MF_00773"/>
    </source>
</evidence>
<evidence type="ECO:0000305" key="2"/>
<organism>
    <name type="scientific">Saccharolobus islandicus (strain L.S.2.15 / Lassen #1)</name>
    <name type="common">Sulfolobus islandicus</name>
    <dbReference type="NCBI Taxonomy" id="429572"/>
    <lineage>
        <taxon>Archaea</taxon>
        <taxon>Thermoproteota</taxon>
        <taxon>Thermoprotei</taxon>
        <taxon>Sulfolobales</taxon>
        <taxon>Sulfolobaceae</taxon>
        <taxon>Saccharolobus</taxon>
    </lineage>
</organism>
<dbReference type="EMBL" id="CP001399">
    <property type="protein sequence ID" value="ACP36011.1"/>
    <property type="molecule type" value="Genomic_DNA"/>
</dbReference>
<dbReference type="RefSeq" id="WP_009990483.1">
    <property type="nucleotide sequence ID" value="NC_012589.1"/>
</dbReference>
<dbReference type="SMR" id="C3MRJ8"/>
<dbReference type="KEGG" id="sis:LS215_2016"/>
<dbReference type="HOGENOM" id="CLU_190191_0_0_2"/>
<dbReference type="OrthoDB" id="55506at2157"/>
<dbReference type="Proteomes" id="UP000001747">
    <property type="component" value="Chromosome"/>
</dbReference>
<dbReference type="GO" id="GO:1990904">
    <property type="term" value="C:ribonucleoprotein complex"/>
    <property type="evidence" value="ECO:0007669"/>
    <property type="project" value="UniProtKB-KW"/>
</dbReference>
<dbReference type="GO" id="GO:0005840">
    <property type="term" value="C:ribosome"/>
    <property type="evidence" value="ECO:0007669"/>
    <property type="project" value="UniProtKB-KW"/>
</dbReference>
<dbReference type="GO" id="GO:0019843">
    <property type="term" value="F:rRNA binding"/>
    <property type="evidence" value="ECO:0007669"/>
    <property type="project" value="UniProtKB-UniRule"/>
</dbReference>
<dbReference type="GO" id="GO:0003735">
    <property type="term" value="F:structural constituent of ribosome"/>
    <property type="evidence" value="ECO:0007669"/>
    <property type="project" value="InterPro"/>
</dbReference>
<dbReference type="GO" id="GO:0008270">
    <property type="term" value="F:zinc ion binding"/>
    <property type="evidence" value="ECO:0007669"/>
    <property type="project" value="UniProtKB-UniRule"/>
</dbReference>
<dbReference type="GO" id="GO:0006412">
    <property type="term" value="P:translation"/>
    <property type="evidence" value="ECO:0007669"/>
    <property type="project" value="UniProtKB-UniRule"/>
</dbReference>
<dbReference type="CDD" id="cd00472">
    <property type="entry name" value="Ribosomal_L24e_L24"/>
    <property type="match status" value="1"/>
</dbReference>
<dbReference type="FunFam" id="2.30.170.20:FF:000001">
    <property type="entry name" value="probable ribosome biogenesis protein RLP24"/>
    <property type="match status" value="1"/>
</dbReference>
<dbReference type="Gene3D" id="2.30.170.20">
    <property type="entry name" value="Ribosomal protein L24e"/>
    <property type="match status" value="1"/>
</dbReference>
<dbReference type="HAMAP" id="MF_00773">
    <property type="entry name" value="Ribosomal_eL24"/>
    <property type="match status" value="1"/>
</dbReference>
<dbReference type="InterPro" id="IPR038630">
    <property type="entry name" value="L24e/L24_sf"/>
</dbReference>
<dbReference type="InterPro" id="IPR056366">
    <property type="entry name" value="Ribosomal_eL24"/>
</dbReference>
<dbReference type="InterPro" id="IPR055345">
    <property type="entry name" value="Ribosomal_eL24-rel_arc"/>
</dbReference>
<dbReference type="InterPro" id="IPR000988">
    <property type="entry name" value="Ribosomal_eL24-rel_N"/>
</dbReference>
<dbReference type="InterPro" id="IPR023442">
    <property type="entry name" value="Ribosomal_eL24_CS"/>
</dbReference>
<dbReference type="InterPro" id="IPR011017">
    <property type="entry name" value="TRASH_dom"/>
</dbReference>
<dbReference type="NCBIfam" id="NF034186">
    <property type="entry name" value="PRK14891.1-1"/>
    <property type="match status" value="1"/>
</dbReference>
<dbReference type="PANTHER" id="PTHR10792">
    <property type="entry name" value="60S RIBOSOMAL PROTEIN L24"/>
    <property type="match status" value="1"/>
</dbReference>
<dbReference type="PANTHER" id="PTHR10792:SF1">
    <property type="entry name" value="RIBOSOMAL PROTEIN L24"/>
    <property type="match status" value="1"/>
</dbReference>
<dbReference type="Pfam" id="PF01246">
    <property type="entry name" value="Ribosomal_L24e"/>
    <property type="match status" value="1"/>
</dbReference>
<dbReference type="SMART" id="SM00746">
    <property type="entry name" value="TRASH"/>
    <property type="match status" value="1"/>
</dbReference>
<dbReference type="SUPFAM" id="SSF57716">
    <property type="entry name" value="Glucocorticoid receptor-like (DNA-binding domain)"/>
    <property type="match status" value="1"/>
</dbReference>
<dbReference type="PROSITE" id="PS01073">
    <property type="entry name" value="RIBOSOMAL_L24E"/>
    <property type="match status" value="1"/>
</dbReference>
<sequence length="61" mass="7321">MPTTRQCSFCGHEIPPGTGLMYVRNDGTILWFCSSKCRKSMLKYHRDPKKYKWTTRYMKVR</sequence>
<reference key="1">
    <citation type="journal article" date="2009" name="Proc. Natl. Acad. Sci. U.S.A.">
        <title>Biogeography of the Sulfolobus islandicus pan-genome.</title>
        <authorList>
            <person name="Reno M.L."/>
            <person name="Held N.L."/>
            <person name="Fields C.J."/>
            <person name="Burke P.V."/>
            <person name="Whitaker R.J."/>
        </authorList>
    </citation>
    <scope>NUCLEOTIDE SEQUENCE [LARGE SCALE GENOMIC DNA]</scope>
    <source>
        <strain>L.S.2.15 / Lassen #1</strain>
    </source>
</reference>
<name>RL24E_SACI2</name>
<accession>C3MRJ8</accession>
<keyword id="KW-0479">Metal-binding</keyword>
<keyword id="KW-0687">Ribonucleoprotein</keyword>
<keyword id="KW-0689">Ribosomal protein</keyword>
<keyword id="KW-0694">RNA-binding</keyword>
<keyword id="KW-0699">rRNA-binding</keyword>
<keyword id="KW-0862">Zinc</keyword>
<keyword id="KW-0863">Zinc-finger</keyword>
<proteinExistence type="inferred from homology"/>
<feature type="chain" id="PRO_1000212911" description="Large ribosomal subunit protein eL24">
    <location>
        <begin position="1"/>
        <end position="61"/>
    </location>
</feature>
<feature type="zinc finger region" description="C4-type" evidence="1">
    <location>
        <begin position="7"/>
        <end position="37"/>
    </location>
</feature>
<feature type="binding site" evidence="1">
    <location>
        <position position="7"/>
    </location>
    <ligand>
        <name>Zn(2+)</name>
        <dbReference type="ChEBI" id="CHEBI:29105"/>
    </ligand>
</feature>
<feature type="binding site" evidence="1">
    <location>
        <position position="10"/>
    </location>
    <ligand>
        <name>Zn(2+)</name>
        <dbReference type="ChEBI" id="CHEBI:29105"/>
    </ligand>
</feature>
<feature type="binding site" evidence="1">
    <location>
        <position position="33"/>
    </location>
    <ligand>
        <name>Zn(2+)</name>
        <dbReference type="ChEBI" id="CHEBI:29105"/>
    </ligand>
</feature>
<feature type="binding site" evidence="1">
    <location>
        <position position="37"/>
    </location>
    <ligand>
        <name>Zn(2+)</name>
        <dbReference type="ChEBI" id="CHEBI:29105"/>
    </ligand>
</feature>
<comment type="function">
    <text evidence="1">Binds to the 23S rRNA.</text>
</comment>
<comment type="cofactor">
    <cofactor evidence="1">
        <name>Zn(2+)</name>
        <dbReference type="ChEBI" id="CHEBI:29105"/>
    </cofactor>
    <text evidence="1">Binds 1 zinc ion per subunit.</text>
</comment>
<comment type="subunit">
    <text evidence="1">Part of the 50S ribosomal subunit. Forms a cluster with proteins L3 and L14.</text>
</comment>
<comment type="similarity">
    <text evidence="1">Belongs to the eukaryotic ribosomal protein eL24 family.</text>
</comment>